<protein>
    <recommendedName>
        <fullName evidence="2">M-poneritoxin-Nc3b</fullName>
        <shortName evidence="2">M-PONTX-Nc3b</shortName>
    </recommendedName>
    <alternativeName>
        <fullName evidence="3">Poneratoxin</fullName>
    </alternativeName>
    <alternativeName>
        <fullName evidence="2">Ponericin Nc3b</fullName>
    </alternativeName>
</protein>
<dbReference type="SMR" id="P0DV18"/>
<dbReference type="GO" id="GO:0005576">
    <property type="term" value="C:extracellular region"/>
    <property type="evidence" value="ECO:0007669"/>
    <property type="project" value="UniProtKB-SubCell"/>
</dbReference>
<dbReference type="GO" id="GO:0016020">
    <property type="term" value="C:membrane"/>
    <property type="evidence" value="ECO:0007669"/>
    <property type="project" value="UniProtKB-KW"/>
</dbReference>
<dbReference type="GO" id="GO:0044218">
    <property type="term" value="C:other organism cell membrane"/>
    <property type="evidence" value="ECO:0007669"/>
    <property type="project" value="UniProtKB-KW"/>
</dbReference>
<dbReference type="GO" id="GO:0090729">
    <property type="term" value="F:toxin activity"/>
    <property type="evidence" value="ECO:0007669"/>
    <property type="project" value="UniProtKB-KW"/>
</dbReference>
<dbReference type="GO" id="GO:0042742">
    <property type="term" value="P:defense response to bacterium"/>
    <property type="evidence" value="ECO:0007669"/>
    <property type="project" value="UniProtKB-KW"/>
</dbReference>
<dbReference type="InterPro" id="IPR010002">
    <property type="entry name" value="Poneritoxin"/>
</dbReference>
<dbReference type="Pfam" id="PF07442">
    <property type="entry name" value="Ponericin"/>
    <property type="match status" value="1"/>
</dbReference>
<comment type="function">
    <text evidence="1">Membrane-perturbating peptide with a few moderate activities (PubMed:34302796). It is insecticidal, since it induces reversible paralysis in insects (L.cuprina) after 1 hour, but fails to kill them (PubMed:34302796). It is also antiparasitic, since it moderately inhibits the larval development of the major pathogenic nematode of ruminants (H.contortus, IC(50)=23.2 uM) and reduces the motility of adult males of the other nematode B.malayi (PubMed:34302796). It does not show antibacterial activity (MIC&gt;40 uM) (PubMed:34302796). It is not cytotoxic to HEK293 cells and does not induce hemolysis in human erythrocytes (PubMed:34302796). It does not cause an increase in intracellular calcium concentration on neuronal and epithelial cell lines (PubMed:34302796).</text>
</comment>
<comment type="subcellular location">
    <subcellularLocation>
        <location evidence="1">Secreted</location>
    </subcellularLocation>
    <subcellularLocation>
        <location evidence="4">Target cell membrane</location>
    </subcellularLocation>
    <text evidence="4">Adopts an alpha-helical conformation in membrane-mimetic environments.</text>
</comment>
<comment type="tissue specificity">
    <text evidence="4">Expressed by the venom gland.</text>
</comment>
<comment type="mass spectrometry" mass="3259.5" method="MALDI" evidence="1">
    <text>Monoisotopic mass.</text>
</comment>
<comment type="toxic dose">
    <text evidence="1">PD(50) is 26.4 nmol/g 1 hour after injection into L.cuprina. LD(50) is &gt;100 nmol/g 24 hours after injection into L.cuprina.</text>
</comment>
<comment type="similarity">
    <text evidence="3">Belongs to the ponericin-G family.</text>
</comment>
<feature type="peptide" id="PRO_0000454519" description="M-poneritoxin-Nc3b" evidence="1">
    <location>
        <begin position="1"/>
        <end position="31"/>
    </location>
</feature>
<feature type="mutagenesis site" description="No change in anthelmintic, insecticidal, cytotoxic and hemolytic activities. No change in intracellular calcium concentration on neuronal and epithelial cell lines." evidence="1">
    <location>
        <position position="1"/>
    </location>
</feature>
<feature type="mutagenesis site" description="Moderate increase in anthelmintic, insecticidal and cytotoxic activities. Gain of activity in causing an increase in intracellular calcium concentration on neuronal cell line but no change on epithelial cell lines." evidence="1">
    <original>T</original>
    <variation>W</variation>
    <location>
        <position position="3"/>
    </location>
</feature>
<feature type="mutagenesis site" description="In (swap)Nc3b; No or weak change in anthelmintic, insecticidal, cytotoxic and hemolytic activities, and no change in intracellular calcium concentration on neuronal and epithelial cell lines; when associated with P-19; E-20; I-21; and I-30." evidence="1">
    <original>E</original>
    <variation>D</variation>
    <location>
        <position position="5"/>
    </location>
</feature>
<feature type="mutagenesis site" description="No or weak change in anthelmintic, insecticidal, cytotoxic and hemolytic activities, and no change in intracellular calcium concentration on neuronal and epithelial cell lines; when associated with D-5; E-20; I-21; and I-30." evidence="1">
    <original>L</original>
    <variation>P</variation>
    <location>
        <position position="19"/>
    </location>
</feature>
<feature type="mutagenesis site" description="No or weak change in anthelmintic, insecticidal, cytotoxic and hemolytic activities, and no change in intracellular calcium concentration on neuronal and epithelial cell lines; when associated with D-5; P-19; I-21; and I-30." evidence="1">
    <original>G</original>
    <variation>E</variation>
    <location>
        <position position="20"/>
    </location>
</feature>
<feature type="mutagenesis site" description="In (swap)Nc3b; No or weak change in anthelmintic, insecticidal, cytotoxic and hemolytic activities, and no change in intracellular calcium concentration on neuronal and epithelial cell lines; when associated with D-5; P-19; E-20; and I-30." evidence="1">
    <original>M</original>
    <variation>I</variation>
    <location>
        <position position="21"/>
    </location>
</feature>
<feature type="mutagenesis site" description="Moderate increase in anthelmintic, and insecticidal activities. Gain of activity in causing an increase in intracellular calcium concentration on neuronal cell line but no change on epithelial cell lines." evidence="1">
    <original>S</original>
    <variation>R</variation>
    <location>
        <position position="23"/>
    </location>
</feature>
<feature type="mutagenesis site" description="In (swap)Nc3b; No or weak change in anthelmintic, insecticidal, cytotoxic and hemolytic activities, and no change in intracellular calcium concentration on neuronal and epithelial cell lines; when associated with D-5; P-19; E-20; and I-21." evidence="1">
    <original>L</original>
    <variation>I</variation>
    <location>
        <position position="30"/>
    </location>
</feature>
<accession>P0DV18</accession>
<organism>
    <name type="scientific">Neoponera commutata</name>
    <name type="common">Large hunting ant</name>
    <name type="synonym">Pachycondyla commutata</name>
    <dbReference type="NCBI Taxonomy" id="613619"/>
    <lineage>
        <taxon>Eukaryota</taxon>
        <taxon>Metazoa</taxon>
        <taxon>Ecdysozoa</taxon>
        <taxon>Arthropoda</taxon>
        <taxon>Hexapoda</taxon>
        <taxon>Insecta</taxon>
        <taxon>Pterygota</taxon>
        <taxon>Neoptera</taxon>
        <taxon>Endopterygota</taxon>
        <taxon>Hymenoptera</taxon>
        <taxon>Apocrita</taxon>
        <taxon>Aculeata</taxon>
        <taxon>Formicoidea</taxon>
        <taxon>Formicidae</taxon>
        <taxon>Ponerinae</taxon>
        <taxon>Ponerini</taxon>
        <taxon>Pachycondyla</taxon>
    </lineage>
</organism>
<evidence type="ECO:0000269" key="1">
    <source>
    </source>
</evidence>
<evidence type="ECO:0000303" key="2">
    <source>
    </source>
</evidence>
<evidence type="ECO:0000305" key="3"/>
<evidence type="ECO:0000305" key="4">
    <source>
    </source>
</evidence>
<proteinExistence type="evidence at protein level"/>
<sequence length="31" mass="3262">AGTKEWLNKAKDFIKEKGLGMLSAAANAALN</sequence>
<reference key="1">
    <citation type="journal article" date="2021" name="Biochem. Pharmacol.">
        <title>Multipurpose peptides: the venoms of Amazonian stinging ants contain anthelmintic ponericins with diverse predatory and defensive activities.</title>
        <authorList>
            <person name="Nixon S.A."/>
            <person name="Robinson S.D."/>
            <person name="Agwa A.J."/>
            <person name="Walker A.A."/>
            <person name="Choudhary S."/>
            <person name="Touchard A."/>
            <person name="Undheim E.A.B."/>
            <person name="Robertson A."/>
            <person name="Vetter I."/>
            <person name="Schroeder C.I."/>
            <person name="Kotze A.C."/>
            <person name="Herzig V."/>
            <person name="King G.F."/>
        </authorList>
    </citation>
    <scope>PROTEIN SEQUENCE</scope>
    <scope>FUNCTION</scope>
    <scope>SUBCELLULAR LOCATION</scope>
    <scope>MASS SPECTROMETRY</scope>
    <scope>SYNTHESIS</scope>
    <scope>TOXIC DOSE</scope>
    <scope>BIOASSAY</scope>
    <scope>MUTAGENESIS OF ALA-1; THR-3; GLU-5; LEU-19; GLY-20; MET-21; SER-23 AND LEU-30</scope>
    <source>
        <tissue>Venom</tissue>
    </source>
</reference>
<name>GTX3B_NEOCU</name>
<keyword id="KW-0044">Antibiotic</keyword>
<keyword id="KW-0929">Antimicrobial</keyword>
<keyword id="KW-0903">Direct protein sequencing</keyword>
<keyword id="KW-0472">Membrane</keyword>
<keyword id="KW-0964">Secreted</keyword>
<keyword id="KW-1052">Target cell membrane</keyword>
<keyword id="KW-1053">Target membrane</keyword>
<keyword id="KW-0800">Toxin</keyword>